<accession>Q47LI4</accession>
<evidence type="ECO:0000255" key="1">
    <source>
        <dbReference type="HAMAP-Rule" id="MF_00368"/>
    </source>
</evidence>
<evidence type="ECO:0000305" key="2"/>
<proteinExistence type="inferred from homology"/>
<reference key="1">
    <citation type="journal article" date="2007" name="J. Bacteriol.">
        <title>Genome sequence and analysis of the soil cellulolytic actinomycete Thermobifida fusca YX.</title>
        <authorList>
            <person name="Lykidis A."/>
            <person name="Mavromatis K."/>
            <person name="Ivanova N."/>
            <person name="Anderson I."/>
            <person name="Land M."/>
            <person name="DiBartolo G."/>
            <person name="Martinez M."/>
            <person name="Lapidus A."/>
            <person name="Lucas S."/>
            <person name="Copeland A."/>
            <person name="Richardson P."/>
            <person name="Wilson D.B."/>
            <person name="Kyrpides N."/>
        </authorList>
    </citation>
    <scope>NUCLEOTIDE SEQUENCE [LARGE SCALE GENOMIC DNA]</scope>
    <source>
        <strain>YX</strain>
    </source>
</reference>
<dbReference type="EMBL" id="CP000088">
    <property type="protein sequence ID" value="AAZ56688.1"/>
    <property type="molecule type" value="Genomic_DNA"/>
</dbReference>
<dbReference type="RefSeq" id="WP_011293078.1">
    <property type="nucleotide sequence ID" value="NC_007333.1"/>
</dbReference>
<dbReference type="SMR" id="Q47LI4"/>
<dbReference type="STRING" id="269800.Tfu_2655"/>
<dbReference type="KEGG" id="tfu:Tfu_2655"/>
<dbReference type="eggNOG" id="COG0222">
    <property type="taxonomic scope" value="Bacteria"/>
</dbReference>
<dbReference type="HOGENOM" id="CLU_086499_3_0_11"/>
<dbReference type="OrthoDB" id="9811748at2"/>
<dbReference type="GO" id="GO:0022625">
    <property type="term" value="C:cytosolic large ribosomal subunit"/>
    <property type="evidence" value="ECO:0007669"/>
    <property type="project" value="TreeGrafter"/>
</dbReference>
<dbReference type="GO" id="GO:0003729">
    <property type="term" value="F:mRNA binding"/>
    <property type="evidence" value="ECO:0007669"/>
    <property type="project" value="TreeGrafter"/>
</dbReference>
<dbReference type="GO" id="GO:0003735">
    <property type="term" value="F:structural constituent of ribosome"/>
    <property type="evidence" value="ECO:0007669"/>
    <property type="project" value="InterPro"/>
</dbReference>
<dbReference type="GO" id="GO:0006412">
    <property type="term" value="P:translation"/>
    <property type="evidence" value="ECO:0007669"/>
    <property type="project" value="UniProtKB-UniRule"/>
</dbReference>
<dbReference type="CDD" id="cd00387">
    <property type="entry name" value="Ribosomal_L7_L12"/>
    <property type="match status" value="1"/>
</dbReference>
<dbReference type="FunFam" id="3.30.1390.10:FF:000001">
    <property type="entry name" value="50S ribosomal protein L7/L12"/>
    <property type="match status" value="1"/>
</dbReference>
<dbReference type="Gene3D" id="3.30.1390.10">
    <property type="match status" value="1"/>
</dbReference>
<dbReference type="Gene3D" id="1.20.5.710">
    <property type="entry name" value="Single helix bin"/>
    <property type="match status" value="1"/>
</dbReference>
<dbReference type="HAMAP" id="MF_00368">
    <property type="entry name" value="Ribosomal_bL12"/>
    <property type="match status" value="1"/>
</dbReference>
<dbReference type="InterPro" id="IPR000206">
    <property type="entry name" value="Ribosomal_bL12"/>
</dbReference>
<dbReference type="InterPro" id="IPR013823">
    <property type="entry name" value="Ribosomal_bL12_C"/>
</dbReference>
<dbReference type="InterPro" id="IPR014719">
    <property type="entry name" value="Ribosomal_bL12_C/ClpS-like"/>
</dbReference>
<dbReference type="InterPro" id="IPR008932">
    <property type="entry name" value="Ribosomal_bL12_oligo"/>
</dbReference>
<dbReference type="InterPro" id="IPR036235">
    <property type="entry name" value="Ribosomal_bL12_oligo_N_sf"/>
</dbReference>
<dbReference type="NCBIfam" id="TIGR00855">
    <property type="entry name" value="L12"/>
    <property type="match status" value="1"/>
</dbReference>
<dbReference type="PANTHER" id="PTHR45987">
    <property type="entry name" value="39S RIBOSOMAL PROTEIN L12"/>
    <property type="match status" value="1"/>
</dbReference>
<dbReference type="PANTHER" id="PTHR45987:SF4">
    <property type="entry name" value="LARGE RIBOSOMAL SUBUNIT PROTEIN BL12M"/>
    <property type="match status" value="1"/>
</dbReference>
<dbReference type="Pfam" id="PF00542">
    <property type="entry name" value="Ribosomal_L12"/>
    <property type="match status" value="1"/>
</dbReference>
<dbReference type="Pfam" id="PF16320">
    <property type="entry name" value="Ribosomal_L12_N"/>
    <property type="match status" value="1"/>
</dbReference>
<dbReference type="SUPFAM" id="SSF54736">
    <property type="entry name" value="ClpS-like"/>
    <property type="match status" value="1"/>
</dbReference>
<dbReference type="SUPFAM" id="SSF48300">
    <property type="entry name" value="Ribosomal protein L7/12, oligomerisation (N-terminal) domain"/>
    <property type="match status" value="1"/>
</dbReference>
<comment type="function">
    <text evidence="1">Forms part of the ribosomal stalk which helps the ribosome interact with GTP-bound translation factors. Is thus essential for accurate translation.</text>
</comment>
<comment type="subunit">
    <text evidence="1">Homodimer. Part of the ribosomal stalk of the 50S ribosomal subunit. Forms a multimeric L10(L12)X complex, where L10 forms an elongated spine to which 2 to 4 L12 dimers bind in a sequential fashion. Binds GTP-bound translation factors.</text>
</comment>
<comment type="similarity">
    <text evidence="1">Belongs to the bacterial ribosomal protein bL12 family.</text>
</comment>
<keyword id="KW-0687">Ribonucleoprotein</keyword>
<keyword id="KW-0689">Ribosomal protein</keyword>
<name>RL7_THEFY</name>
<organism>
    <name type="scientific">Thermobifida fusca (strain YX)</name>
    <dbReference type="NCBI Taxonomy" id="269800"/>
    <lineage>
        <taxon>Bacteria</taxon>
        <taxon>Bacillati</taxon>
        <taxon>Actinomycetota</taxon>
        <taxon>Actinomycetes</taxon>
        <taxon>Streptosporangiales</taxon>
        <taxon>Nocardiopsidaceae</taxon>
        <taxon>Thermobifida</taxon>
    </lineage>
</organism>
<protein>
    <recommendedName>
        <fullName evidence="1">Large ribosomal subunit protein bL12</fullName>
    </recommendedName>
    <alternativeName>
        <fullName evidence="2">50S ribosomal protein L7/L12</fullName>
    </alternativeName>
</protein>
<gene>
    <name evidence="1" type="primary">rplL</name>
    <name type="ordered locus">Tfu_2655</name>
</gene>
<sequence>MAKLSHEELLSAFEEMTLLELSEFVKLFEEKFDVTAAAPAAVVAAAPAGGGGGEAAVEEEKDEFDVILESAGDKKIQVIKEVRGLTNLGLKDAKDLVDSAPKPVLEGVNKETAEKAKAALEGAGATVTLK</sequence>
<feature type="chain" id="PRO_0000243517" description="Large ribosomal subunit protein bL12">
    <location>
        <begin position="1"/>
        <end position="130"/>
    </location>
</feature>